<feature type="chain" id="PRO_1000005903" description="DNA-directed RNA polymerase subunit omega">
    <location>
        <begin position="1"/>
        <end position="67"/>
    </location>
</feature>
<name>RPOZ_BURP6</name>
<proteinExistence type="inferred from homology"/>
<dbReference type="EC" id="2.7.7.6" evidence="1"/>
<dbReference type="EMBL" id="CP000570">
    <property type="protein sequence ID" value="ABN82110.1"/>
    <property type="molecule type" value="Genomic_DNA"/>
</dbReference>
<dbReference type="RefSeq" id="WP_004185855.1">
    <property type="nucleotide sequence ID" value="NC_009074.1"/>
</dbReference>
<dbReference type="SMR" id="A3NC92"/>
<dbReference type="GeneID" id="93061155"/>
<dbReference type="KEGG" id="bpd:BURPS668_2948"/>
<dbReference type="HOGENOM" id="CLU_125406_5_2_4"/>
<dbReference type="GO" id="GO:0000428">
    <property type="term" value="C:DNA-directed RNA polymerase complex"/>
    <property type="evidence" value="ECO:0007669"/>
    <property type="project" value="UniProtKB-KW"/>
</dbReference>
<dbReference type="GO" id="GO:0003677">
    <property type="term" value="F:DNA binding"/>
    <property type="evidence" value="ECO:0007669"/>
    <property type="project" value="UniProtKB-UniRule"/>
</dbReference>
<dbReference type="GO" id="GO:0003899">
    <property type="term" value="F:DNA-directed RNA polymerase activity"/>
    <property type="evidence" value="ECO:0007669"/>
    <property type="project" value="UniProtKB-UniRule"/>
</dbReference>
<dbReference type="GO" id="GO:0006351">
    <property type="term" value="P:DNA-templated transcription"/>
    <property type="evidence" value="ECO:0007669"/>
    <property type="project" value="UniProtKB-UniRule"/>
</dbReference>
<dbReference type="Gene3D" id="3.90.940.10">
    <property type="match status" value="1"/>
</dbReference>
<dbReference type="HAMAP" id="MF_00366">
    <property type="entry name" value="RNApol_bact_RpoZ"/>
    <property type="match status" value="1"/>
</dbReference>
<dbReference type="InterPro" id="IPR003716">
    <property type="entry name" value="DNA-dir_RNA_pol_omega"/>
</dbReference>
<dbReference type="InterPro" id="IPR006110">
    <property type="entry name" value="Pol_omega/Rpo6/RPB6"/>
</dbReference>
<dbReference type="InterPro" id="IPR036161">
    <property type="entry name" value="RPB6/omega-like_sf"/>
</dbReference>
<dbReference type="NCBIfam" id="TIGR00690">
    <property type="entry name" value="rpoZ"/>
    <property type="match status" value="1"/>
</dbReference>
<dbReference type="PANTHER" id="PTHR34476">
    <property type="entry name" value="DNA-DIRECTED RNA POLYMERASE SUBUNIT OMEGA"/>
    <property type="match status" value="1"/>
</dbReference>
<dbReference type="PANTHER" id="PTHR34476:SF1">
    <property type="entry name" value="DNA-DIRECTED RNA POLYMERASE SUBUNIT OMEGA"/>
    <property type="match status" value="1"/>
</dbReference>
<dbReference type="Pfam" id="PF01192">
    <property type="entry name" value="RNA_pol_Rpb6"/>
    <property type="match status" value="1"/>
</dbReference>
<dbReference type="SMART" id="SM01409">
    <property type="entry name" value="RNA_pol_Rpb6"/>
    <property type="match status" value="1"/>
</dbReference>
<dbReference type="SUPFAM" id="SSF63562">
    <property type="entry name" value="RPB6/omega subunit-like"/>
    <property type="match status" value="1"/>
</dbReference>
<sequence length="67" mass="7400">MARITVEDCLKQIPNRFELALAATYRARQLAQGHTPKIESRDKPTVVALREIAAGQVGVEMLKKVPA</sequence>
<evidence type="ECO:0000255" key="1">
    <source>
        <dbReference type="HAMAP-Rule" id="MF_00366"/>
    </source>
</evidence>
<reference key="1">
    <citation type="journal article" date="2010" name="Genome Biol. Evol.">
        <title>Continuing evolution of Burkholderia mallei through genome reduction and large-scale rearrangements.</title>
        <authorList>
            <person name="Losada L."/>
            <person name="Ronning C.M."/>
            <person name="DeShazer D."/>
            <person name="Woods D."/>
            <person name="Fedorova N."/>
            <person name="Kim H.S."/>
            <person name="Shabalina S.A."/>
            <person name="Pearson T.R."/>
            <person name="Brinkac L."/>
            <person name="Tan P."/>
            <person name="Nandi T."/>
            <person name="Crabtree J."/>
            <person name="Badger J."/>
            <person name="Beckstrom-Sternberg S."/>
            <person name="Saqib M."/>
            <person name="Schutzer S.E."/>
            <person name="Keim P."/>
            <person name="Nierman W.C."/>
        </authorList>
    </citation>
    <scope>NUCLEOTIDE SEQUENCE [LARGE SCALE GENOMIC DNA]</scope>
    <source>
        <strain>668</strain>
    </source>
</reference>
<comment type="function">
    <text evidence="1">Promotes RNA polymerase assembly. Latches the N- and C-terminal regions of the beta' subunit thereby facilitating its interaction with the beta and alpha subunits.</text>
</comment>
<comment type="catalytic activity">
    <reaction evidence="1">
        <text>RNA(n) + a ribonucleoside 5'-triphosphate = RNA(n+1) + diphosphate</text>
        <dbReference type="Rhea" id="RHEA:21248"/>
        <dbReference type="Rhea" id="RHEA-COMP:14527"/>
        <dbReference type="Rhea" id="RHEA-COMP:17342"/>
        <dbReference type="ChEBI" id="CHEBI:33019"/>
        <dbReference type="ChEBI" id="CHEBI:61557"/>
        <dbReference type="ChEBI" id="CHEBI:140395"/>
        <dbReference type="EC" id="2.7.7.6"/>
    </reaction>
</comment>
<comment type="subunit">
    <text evidence="1">The RNAP catalytic core consists of 2 alpha, 1 beta, 1 beta' and 1 omega subunit. When a sigma factor is associated with the core the holoenzyme is formed, which can initiate transcription.</text>
</comment>
<comment type="similarity">
    <text evidence="1">Belongs to the RNA polymerase subunit omega family.</text>
</comment>
<gene>
    <name evidence="1" type="primary">rpoZ</name>
    <name type="ordered locus">BURPS668_2948</name>
</gene>
<accession>A3NC92</accession>
<keyword id="KW-0240">DNA-directed RNA polymerase</keyword>
<keyword id="KW-0548">Nucleotidyltransferase</keyword>
<keyword id="KW-0804">Transcription</keyword>
<keyword id="KW-0808">Transferase</keyword>
<organism>
    <name type="scientific">Burkholderia pseudomallei (strain 668)</name>
    <dbReference type="NCBI Taxonomy" id="320373"/>
    <lineage>
        <taxon>Bacteria</taxon>
        <taxon>Pseudomonadati</taxon>
        <taxon>Pseudomonadota</taxon>
        <taxon>Betaproteobacteria</taxon>
        <taxon>Burkholderiales</taxon>
        <taxon>Burkholderiaceae</taxon>
        <taxon>Burkholderia</taxon>
        <taxon>pseudomallei group</taxon>
    </lineage>
</organism>
<protein>
    <recommendedName>
        <fullName evidence="1">DNA-directed RNA polymerase subunit omega</fullName>
        <shortName evidence="1">RNAP omega subunit</shortName>
        <ecNumber evidence="1">2.7.7.6</ecNumber>
    </recommendedName>
    <alternativeName>
        <fullName evidence="1">RNA polymerase omega subunit</fullName>
    </alternativeName>
    <alternativeName>
        <fullName evidence="1">Transcriptase subunit omega</fullName>
    </alternativeName>
</protein>